<organism>
    <name type="scientific">Ruegeria pomeroyi (strain ATCC 700808 / DSM 15171 / DSS-3)</name>
    <name type="common">Silicibacter pomeroyi</name>
    <dbReference type="NCBI Taxonomy" id="246200"/>
    <lineage>
        <taxon>Bacteria</taxon>
        <taxon>Pseudomonadati</taxon>
        <taxon>Pseudomonadota</taxon>
        <taxon>Alphaproteobacteria</taxon>
        <taxon>Rhodobacterales</taxon>
        <taxon>Roseobacteraceae</taxon>
        <taxon>Ruegeria</taxon>
    </lineage>
</organism>
<feature type="chain" id="PRO_0000241153" description="Glutamyl-tRNA(Gln) amidotransferase subunit A">
    <location>
        <begin position="1"/>
        <end position="496"/>
    </location>
</feature>
<feature type="active site" description="Charge relay system" evidence="1">
    <location>
        <position position="79"/>
    </location>
</feature>
<feature type="active site" description="Charge relay system" evidence="1">
    <location>
        <position position="159"/>
    </location>
</feature>
<feature type="active site" description="Acyl-ester intermediate" evidence="1">
    <location>
        <position position="183"/>
    </location>
</feature>
<comment type="function">
    <text evidence="1">Allows the formation of correctly charged Gln-tRNA(Gln) through the transamidation of misacylated Glu-tRNA(Gln) in organisms which lack glutaminyl-tRNA synthetase. The reaction takes place in the presence of glutamine and ATP through an activated gamma-phospho-Glu-tRNA(Gln).</text>
</comment>
<comment type="catalytic activity">
    <reaction evidence="1">
        <text>L-glutamyl-tRNA(Gln) + L-glutamine + ATP + H2O = L-glutaminyl-tRNA(Gln) + L-glutamate + ADP + phosphate + H(+)</text>
        <dbReference type="Rhea" id="RHEA:17521"/>
        <dbReference type="Rhea" id="RHEA-COMP:9681"/>
        <dbReference type="Rhea" id="RHEA-COMP:9684"/>
        <dbReference type="ChEBI" id="CHEBI:15377"/>
        <dbReference type="ChEBI" id="CHEBI:15378"/>
        <dbReference type="ChEBI" id="CHEBI:29985"/>
        <dbReference type="ChEBI" id="CHEBI:30616"/>
        <dbReference type="ChEBI" id="CHEBI:43474"/>
        <dbReference type="ChEBI" id="CHEBI:58359"/>
        <dbReference type="ChEBI" id="CHEBI:78520"/>
        <dbReference type="ChEBI" id="CHEBI:78521"/>
        <dbReference type="ChEBI" id="CHEBI:456216"/>
        <dbReference type="EC" id="6.3.5.7"/>
    </reaction>
</comment>
<comment type="subunit">
    <text evidence="1">Heterotrimer of A, B and C subunits.</text>
</comment>
<comment type="similarity">
    <text evidence="1">Belongs to the amidase family. GatA subfamily.</text>
</comment>
<proteinExistence type="inferred from homology"/>
<keyword id="KW-0067">ATP-binding</keyword>
<keyword id="KW-0436">Ligase</keyword>
<keyword id="KW-0547">Nucleotide-binding</keyword>
<keyword id="KW-0648">Protein biosynthesis</keyword>
<keyword id="KW-1185">Reference proteome</keyword>
<accession>Q5LP80</accession>
<protein>
    <recommendedName>
        <fullName evidence="1">Glutamyl-tRNA(Gln) amidotransferase subunit A</fullName>
        <shortName evidence="1">Glu-ADT subunit A</shortName>
        <ecNumber evidence="1">6.3.5.7</ecNumber>
    </recommendedName>
</protein>
<name>GATA_RUEPO</name>
<reference key="1">
    <citation type="journal article" date="2004" name="Nature">
        <title>Genome sequence of Silicibacter pomeroyi reveals adaptations to the marine environment.</title>
        <authorList>
            <person name="Moran M.A."/>
            <person name="Buchan A."/>
            <person name="Gonzalez J.M."/>
            <person name="Heidelberg J.F."/>
            <person name="Whitman W.B."/>
            <person name="Kiene R.P."/>
            <person name="Henriksen J.R."/>
            <person name="King G.M."/>
            <person name="Belas R."/>
            <person name="Fuqua C."/>
            <person name="Brinkac L.M."/>
            <person name="Lewis M."/>
            <person name="Johri S."/>
            <person name="Weaver B."/>
            <person name="Pai G."/>
            <person name="Eisen J.A."/>
            <person name="Rahe E."/>
            <person name="Sheldon W.M."/>
            <person name="Ye W."/>
            <person name="Miller T.R."/>
            <person name="Carlton J."/>
            <person name="Rasko D.A."/>
            <person name="Paulsen I.T."/>
            <person name="Ren Q."/>
            <person name="Daugherty S.C."/>
            <person name="DeBoy R.T."/>
            <person name="Dodson R.J."/>
            <person name="Durkin A.S."/>
            <person name="Madupu R."/>
            <person name="Nelson W.C."/>
            <person name="Sullivan S.A."/>
            <person name="Rosovitz M.J."/>
            <person name="Haft D.H."/>
            <person name="Selengut J."/>
            <person name="Ward N."/>
        </authorList>
    </citation>
    <scope>NUCLEOTIDE SEQUENCE [LARGE SCALE GENOMIC DNA]</scope>
    <source>
        <strain>ATCC 700808 / DSM 15171 / DSS-3</strain>
    </source>
</reference>
<reference key="2">
    <citation type="journal article" date="2014" name="Stand. Genomic Sci.">
        <title>An updated genome annotation for the model marine bacterium Ruegeria pomeroyi DSS-3.</title>
        <authorList>
            <person name="Rivers A.R."/>
            <person name="Smith C.B."/>
            <person name="Moran M.A."/>
        </authorList>
    </citation>
    <scope>GENOME REANNOTATION</scope>
    <source>
        <strain>ATCC 700808 / DSM 15171 / DSS-3</strain>
    </source>
</reference>
<sequence>MSDLNTLTLAQARDALRKGETTSVALTEACLAAIEGAGALNAFVHKTPELALERAKAADERLQGREEAPKMCGLPIGIKDLFCTKGVPSQAASRILEGFKPEYESTVSQQLADAGAVMLGKLNMDEFAMGSSNETSCYGNAVNPWRRGNDDAALTPGGSSGGSAAAVAADLCLAATGTDTGGSIRQPAAFVGITGIKPTYGRCSRWGIVAFASSLDQAGPMTKDVRDAAIMLEAMCGHDPKDSTSAELAVPDFEAMLTGDIRGKVIGIPREYRMDGMPEEIEALWQQGTEMLRAAGAEIRDISLPHTKYALPTYYVIAPAEASSNLARYDGVRYGHRAKLAQGDGITEMYEKTRAEGFGHEVQRRVMVGTYVLSAGFYDAYYNRARKVRSLIKKDFEDVFAAGVDAILTPATPSAAFGLGEMTDADPVQMYLNDVFTVTVNLAGLPGVSVPAGLDKQGLPLGLQLIGRPWEEGDLLNTAYALEQAAGFVAKPSKWW</sequence>
<dbReference type="EC" id="6.3.5.7" evidence="1"/>
<dbReference type="EMBL" id="CP000031">
    <property type="protein sequence ID" value="AAV96208.1"/>
    <property type="molecule type" value="Genomic_DNA"/>
</dbReference>
<dbReference type="RefSeq" id="WP_011048666.1">
    <property type="nucleotide sequence ID" value="NC_003911.12"/>
</dbReference>
<dbReference type="SMR" id="Q5LP80"/>
<dbReference type="STRING" id="246200.SPO2969"/>
<dbReference type="PaxDb" id="246200-SPO2969"/>
<dbReference type="KEGG" id="sil:SPO2969"/>
<dbReference type="eggNOG" id="COG0154">
    <property type="taxonomic scope" value="Bacteria"/>
</dbReference>
<dbReference type="HOGENOM" id="CLU_009600_0_3_5"/>
<dbReference type="OrthoDB" id="9811471at2"/>
<dbReference type="Proteomes" id="UP000001023">
    <property type="component" value="Chromosome"/>
</dbReference>
<dbReference type="GO" id="GO:0030956">
    <property type="term" value="C:glutamyl-tRNA(Gln) amidotransferase complex"/>
    <property type="evidence" value="ECO:0007669"/>
    <property type="project" value="InterPro"/>
</dbReference>
<dbReference type="GO" id="GO:0005524">
    <property type="term" value="F:ATP binding"/>
    <property type="evidence" value="ECO:0007669"/>
    <property type="project" value="UniProtKB-KW"/>
</dbReference>
<dbReference type="GO" id="GO:0050567">
    <property type="term" value="F:glutaminyl-tRNA synthase (glutamine-hydrolyzing) activity"/>
    <property type="evidence" value="ECO:0007669"/>
    <property type="project" value="UniProtKB-UniRule"/>
</dbReference>
<dbReference type="GO" id="GO:0006412">
    <property type="term" value="P:translation"/>
    <property type="evidence" value="ECO:0007669"/>
    <property type="project" value="UniProtKB-UniRule"/>
</dbReference>
<dbReference type="Gene3D" id="3.90.1300.10">
    <property type="entry name" value="Amidase signature (AS) domain"/>
    <property type="match status" value="1"/>
</dbReference>
<dbReference type="HAMAP" id="MF_00120">
    <property type="entry name" value="GatA"/>
    <property type="match status" value="1"/>
</dbReference>
<dbReference type="InterPro" id="IPR000120">
    <property type="entry name" value="Amidase"/>
</dbReference>
<dbReference type="InterPro" id="IPR020556">
    <property type="entry name" value="Amidase_CS"/>
</dbReference>
<dbReference type="InterPro" id="IPR023631">
    <property type="entry name" value="Amidase_dom"/>
</dbReference>
<dbReference type="InterPro" id="IPR036928">
    <property type="entry name" value="AS_sf"/>
</dbReference>
<dbReference type="InterPro" id="IPR004412">
    <property type="entry name" value="GatA"/>
</dbReference>
<dbReference type="NCBIfam" id="TIGR00132">
    <property type="entry name" value="gatA"/>
    <property type="match status" value="1"/>
</dbReference>
<dbReference type="PANTHER" id="PTHR11895:SF151">
    <property type="entry name" value="GLUTAMYL-TRNA(GLN) AMIDOTRANSFERASE SUBUNIT A"/>
    <property type="match status" value="1"/>
</dbReference>
<dbReference type="PANTHER" id="PTHR11895">
    <property type="entry name" value="TRANSAMIDASE"/>
    <property type="match status" value="1"/>
</dbReference>
<dbReference type="Pfam" id="PF01425">
    <property type="entry name" value="Amidase"/>
    <property type="match status" value="1"/>
</dbReference>
<dbReference type="SUPFAM" id="SSF75304">
    <property type="entry name" value="Amidase signature (AS) enzymes"/>
    <property type="match status" value="1"/>
</dbReference>
<dbReference type="PROSITE" id="PS00571">
    <property type="entry name" value="AMIDASES"/>
    <property type="match status" value="1"/>
</dbReference>
<evidence type="ECO:0000255" key="1">
    <source>
        <dbReference type="HAMAP-Rule" id="MF_00120"/>
    </source>
</evidence>
<gene>
    <name evidence="1" type="primary">gatA</name>
    <name type="ordered locus">SPO2969</name>
</gene>